<gene>
    <name type="primary">MED4</name>
    <name type="ORF">AGAP004063</name>
</gene>
<proteinExistence type="inferred from homology"/>
<reference key="1">
    <citation type="journal article" date="2002" name="Science">
        <title>The genome sequence of the malaria mosquito Anopheles gambiae.</title>
        <authorList>
            <person name="Holt R.A."/>
            <person name="Subramanian G.M."/>
            <person name="Halpern A."/>
            <person name="Sutton G.G."/>
            <person name="Charlab R."/>
            <person name="Nusskern D.R."/>
            <person name="Wincker P."/>
            <person name="Clark A.G."/>
            <person name="Ribeiro J.M.C."/>
            <person name="Wides R."/>
            <person name="Salzberg S.L."/>
            <person name="Loftus B.J."/>
            <person name="Yandell M.D."/>
            <person name="Majoros W.H."/>
            <person name="Rusch D.B."/>
            <person name="Lai Z."/>
            <person name="Kraft C.L."/>
            <person name="Abril J.F."/>
            <person name="Anthouard V."/>
            <person name="Arensburger P."/>
            <person name="Atkinson P.W."/>
            <person name="Baden H."/>
            <person name="de Berardinis V."/>
            <person name="Baldwin D."/>
            <person name="Benes V."/>
            <person name="Biedler J."/>
            <person name="Blass C."/>
            <person name="Bolanos R."/>
            <person name="Boscus D."/>
            <person name="Barnstead M."/>
            <person name="Cai S."/>
            <person name="Center A."/>
            <person name="Chaturverdi K."/>
            <person name="Christophides G.K."/>
            <person name="Chrystal M.A.M."/>
            <person name="Clamp M."/>
            <person name="Cravchik A."/>
            <person name="Curwen V."/>
            <person name="Dana A."/>
            <person name="Delcher A."/>
            <person name="Dew I."/>
            <person name="Evans C.A."/>
            <person name="Flanigan M."/>
            <person name="Grundschober-Freimoser A."/>
            <person name="Friedli L."/>
            <person name="Gu Z."/>
            <person name="Guan P."/>
            <person name="Guigo R."/>
            <person name="Hillenmeyer M.E."/>
            <person name="Hladun S.L."/>
            <person name="Hogan J.R."/>
            <person name="Hong Y.S."/>
            <person name="Hoover J."/>
            <person name="Jaillon O."/>
            <person name="Ke Z."/>
            <person name="Kodira C.D."/>
            <person name="Kokoza E."/>
            <person name="Koutsos A."/>
            <person name="Letunic I."/>
            <person name="Levitsky A.A."/>
            <person name="Liang Y."/>
            <person name="Lin J.-J."/>
            <person name="Lobo N.F."/>
            <person name="Lopez J.R."/>
            <person name="Malek J.A."/>
            <person name="McIntosh T.C."/>
            <person name="Meister S."/>
            <person name="Miller J.R."/>
            <person name="Mobarry C."/>
            <person name="Mongin E."/>
            <person name="Murphy S.D."/>
            <person name="O'Brochta D.A."/>
            <person name="Pfannkoch C."/>
            <person name="Qi R."/>
            <person name="Regier M.A."/>
            <person name="Remington K."/>
            <person name="Shao H."/>
            <person name="Sharakhova M.V."/>
            <person name="Sitter C.D."/>
            <person name="Shetty J."/>
            <person name="Smith T.J."/>
            <person name="Strong R."/>
            <person name="Sun J."/>
            <person name="Thomasova D."/>
            <person name="Ton L.Q."/>
            <person name="Topalis P."/>
            <person name="Tu Z.J."/>
            <person name="Unger M.F."/>
            <person name="Walenz B."/>
            <person name="Wang A.H."/>
            <person name="Wang J."/>
            <person name="Wang M."/>
            <person name="Wang X."/>
            <person name="Woodford K.J."/>
            <person name="Wortman J.R."/>
            <person name="Wu M."/>
            <person name="Yao A."/>
            <person name="Zdobnov E.M."/>
            <person name="Zhang H."/>
            <person name="Zhao Q."/>
            <person name="Zhao S."/>
            <person name="Zhu S.C."/>
            <person name="Zhimulev I."/>
            <person name="Coluzzi M."/>
            <person name="della Torre A."/>
            <person name="Roth C.W."/>
            <person name="Louis C."/>
            <person name="Kalush F."/>
            <person name="Mural R.J."/>
            <person name="Myers E.W."/>
            <person name="Adams M.D."/>
            <person name="Smith H.O."/>
            <person name="Broder S."/>
            <person name="Gardner M.J."/>
            <person name="Fraser C.M."/>
            <person name="Birney E."/>
            <person name="Bork P."/>
            <person name="Brey P.T."/>
            <person name="Venter J.C."/>
            <person name="Weissenbach J."/>
            <person name="Kafatos F.C."/>
            <person name="Collins F.H."/>
            <person name="Hoffman S.L."/>
        </authorList>
    </citation>
    <scope>NUCLEOTIDE SEQUENCE [LARGE SCALE GENOMIC DNA]</scope>
    <source>
        <strain>PEST</strain>
    </source>
</reference>
<organism>
    <name type="scientific">Anopheles gambiae</name>
    <name type="common">African malaria mosquito</name>
    <dbReference type="NCBI Taxonomy" id="7165"/>
    <lineage>
        <taxon>Eukaryota</taxon>
        <taxon>Metazoa</taxon>
        <taxon>Ecdysozoa</taxon>
        <taxon>Arthropoda</taxon>
        <taxon>Hexapoda</taxon>
        <taxon>Insecta</taxon>
        <taxon>Pterygota</taxon>
        <taxon>Neoptera</taxon>
        <taxon>Endopterygota</taxon>
        <taxon>Diptera</taxon>
        <taxon>Nematocera</taxon>
        <taxon>Culicoidea</taxon>
        <taxon>Culicidae</taxon>
        <taxon>Anophelinae</taxon>
        <taxon>Anopheles</taxon>
    </lineage>
</organism>
<accession>Q7QH62</accession>
<feature type="chain" id="PRO_0000302069" description="Mediator of RNA polymerase II transcription subunit 4">
    <location>
        <begin position="1"/>
        <end position="263"/>
    </location>
</feature>
<feature type="region of interest" description="Disordered" evidence="3">
    <location>
        <begin position="209"/>
        <end position="228"/>
    </location>
</feature>
<feature type="region of interest" description="Disordered" evidence="3">
    <location>
        <begin position="235"/>
        <end position="263"/>
    </location>
</feature>
<feature type="coiled-coil region" evidence="2">
    <location>
        <begin position="61"/>
        <end position="111"/>
    </location>
</feature>
<feature type="compositionally biased region" description="Low complexity" evidence="3">
    <location>
        <begin position="251"/>
        <end position="263"/>
    </location>
</feature>
<protein>
    <recommendedName>
        <fullName>Mediator of RNA polymerase II transcription subunit 4</fullName>
    </recommendedName>
    <alternativeName>
        <fullName>Mediator complex subunit 4</fullName>
    </alternativeName>
</protein>
<keyword id="KW-0010">Activator</keyword>
<keyword id="KW-0175">Coiled coil</keyword>
<keyword id="KW-0539">Nucleus</keyword>
<keyword id="KW-1185">Reference proteome</keyword>
<keyword id="KW-0804">Transcription</keyword>
<keyword id="KW-0805">Transcription regulation</keyword>
<comment type="function">
    <text evidence="1">Component of the Mediator complex, a coactivator involved in the regulated transcription of nearly all RNA polymerase II-dependent genes. Mediator functions as a bridge to convey information from gene-specific regulatory proteins to the basal RNA polymerase II transcription machinery. Mediator is recruited to promoters by direct interactions with regulatory proteins and serves as a scaffold for the assembly of a functional preinitiation complex with RNA polymerase II and the general transcription factors (By similarity).</text>
</comment>
<comment type="subunit">
    <text evidence="1">Component of the Mediator complex.</text>
</comment>
<comment type="subcellular location">
    <subcellularLocation>
        <location evidence="1">Nucleus</location>
    </subcellularLocation>
</comment>
<comment type="similarity">
    <text evidence="4">Belongs to the Mediator complex subunit 4 family.</text>
</comment>
<sequence>MSSYHLSTRERLLAIINDIEIVAKELIENTIAPKAQKMSSTDHAQLVELLVLKDKELKATLQLAAEQAGIEKNMDALREQVRKQDEEINQLQRQLKEAEQILATSIFQARQKLASIAKANKRPVSSEELIKFAHRISASHAICAPLTWQQGDLRRPYPTDIEMRLGFLGKSDLNINGHNLQHPNSLNEMHRNASTVGAGGAGGDIPASAPNQFAWHPSGELHMSMGAGAGSVSLDTRAHKDASQDDVEVMSTESSSSSSSDSQ</sequence>
<evidence type="ECO:0000250" key="1"/>
<evidence type="ECO:0000255" key="2"/>
<evidence type="ECO:0000256" key="3">
    <source>
        <dbReference type="SAM" id="MobiDB-lite"/>
    </source>
</evidence>
<evidence type="ECO:0000305" key="4"/>
<dbReference type="EMBL" id="AAAB01008817">
    <property type="protein sequence ID" value="EAA05349.3"/>
    <property type="molecule type" value="Genomic_DNA"/>
</dbReference>
<dbReference type="SMR" id="Q7QH62"/>
<dbReference type="FunCoup" id="Q7QH62">
    <property type="interactions" value="2583"/>
</dbReference>
<dbReference type="STRING" id="7165.Q7QH62"/>
<dbReference type="PaxDb" id="7165-AGAP004063-PA"/>
<dbReference type="EnsemblMetazoa" id="AGAP004063-RA">
    <property type="protein sequence ID" value="AGAP004063-PA"/>
    <property type="gene ID" value="AGAP004063"/>
</dbReference>
<dbReference type="GeneID" id="1270863"/>
<dbReference type="KEGG" id="aga:1270863"/>
<dbReference type="CTD" id="29079"/>
<dbReference type="VEuPathDB" id="VectorBase:AGAMI1_006732"/>
<dbReference type="VEuPathDB" id="VectorBase:AGAP004063"/>
<dbReference type="eggNOG" id="KOG4552">
    <property type="taxonomic scope" value="Eukaryota"/>
</dbReference>
<dbReference type="HOGENOM" id="CLU_082233_1_0_1"/>
<dbReference type="InParanoid" id="Q7QH62"/>
<dbReference type="OMA" id="LEMRLGM"/>
<dbReference type="OrthoDB" id="1929813at2759"/>
<dbReference type="PhylomeDB" id="Q7QH62"/>
<dbReference type="Proteomes" id="UP000007062">
    <property type="component" value="Chromosome 2R"/>
</dbReference>
<dbReference type="GO" id="GO:0070847">
    <property type="term" value="C:core mediator complex"/>
    <property type="evidence" value="ECO:0000318"/>
    <property type="project" value="GO_Central"/>
</dbReference>
<dbReference type="GO" id="GO:0016592">
    <property type="term" value="C:mediator complex"/>
    <property type="evidence" value="ECO:0007669"/>
    <property type="project" value="InterPro"/>
</dbReference>
<dbReference type="GO" id="GO:0003712">
    <property type="term" value="F:transcription coregulator activity"/>
    <property type="evidence" value="ECO:0000318"/>
    <property type="project" value="GO_Central"/>
</dbReference>
<dbReference type="GO" id="GO:0006357">
    <property type="term" value="P:regulation of transcription by RNA polymerase II"/>
    <property type="evidence" value="ECO:0000318"/>
    <property type="project" value="GO_Central"/>
</dbReference>
<dbReference type="InterPro" id="IPR019258">
    <property type="entry name" value="Mediator_Med4"/>
</dbReference>
<dbReference type="PANTHER" id="PTHR13208">
    <property type="entry name" value="MEDIATOR OF RNA POLYMERASE II TRANSCRIPTION SUBUNIT 4"/>
    <property type="match status" value="1"/>
</dbReference>
<dbReference type="PANTHER" id="PTHR13208:SF2">
    <property type="entry name" value="MEDIATOR OF RNA POLYMERASE II TRANSCRIPTION SUBUNIT 4"/>
    <property type="match status" value="1"/>
</dbReference>
<dbReference type="Pfam" id="PF10018">
    <property type="entry name" value="Med4"/>
    <property type="match status" value="1"/>
</dbReference>
<name>MED4_ANOGA</name>